<name>DCTR_ECO57</name>
<feature type="chain" id="PRO_0000184147" description="HTH-type transcriptional regulator DctR">
    <location>
        <begin position="1"/>
        <end position="176"/>
    </location>
</feature>
<feature type="domain" description="HTH luxR-type" evidence="2">
    <location>
        <begin position="109"/>
        <end position="174"/>
    </location>
</feature>
<feature type="DNA-binding region" description="H-T-H motif" evidence="2">
    <location>
        <begin position="133"/>
        <end position="152"/>
    </location>
</feature>
<evidence type="ECO:0000250" key="1"/>
<evidence type="ECO:0000255" key="2">
    <source>
        <dbReference type="PROSITE-ProRule" id="PRU00411"/>
    </source>
</evidence>
<evidence type="ECO:0000269" key="3">
    <source>
    </source>
</evidence>
<keyword id="KW-0238">DNA-binding</keyword>
<keyword id="KW-1185">Reference proteome</keyword>
<keyword id="KW-0804">Transcription</keyword>
<keyword id="KW-0805">Transcription regulation</keyword>
<dbReference type="EMBL" id="AE005174">
    <property type="protein sequence ID" value="AAG58639.1"/>
    <property type="molecule type" value="Genomic_DNA"/>
</dbReference>
<dbReference type="EMBL" id="BA000007">
    <property type="protein sequence ID" value="BAB37801.1"/>
    <property type="molecule type" value="Genomic_DNA"/>
</dbReference>
<dbReference type="PIR" id="B91176">
    <property type="entry name" value="B91176"/>
</dbReference>
<dbReference type="PIR" id="C86022">
    <property type="entry name" value="C86022"/>
</dbReference>
<dbReference type="RefSeq" id="NP_312405.1">
    <property type="nucleotide sequence ID" value="NC_002695.1"/>
</dbReference>
<dbReference type="RefSeq" id="WP_000478621.1">
    <property type="nucleotide sequence ID" value="NZ_VOAI01000004.1"/>
</dbReference>
<dbReference type="SMR" id="Q8X5P3"/>
<dbReference type="STRING" id="155864.Z4909"/>
<dbReference type="GeneID" id="915765"/>
<dbReference type="KEGG" id="ece:Z4909"/>
<dbReference type="KEGG" id="ecs:ECs_4378"/>
<dbReference type="PATRIC" id="fig|386585.9.peg.4574"/>
<dbReference type="eggNOG" id="COG2197">
    <property type="taxonomic scope" value="Bacteria"/>
</dbReference>
<dbReference type="HOGENOM" id="CLU_1522929_0_0_6"/>
<dbReference type="OMA" id="VHIQNEK"/>
<dbReference type="Proteomes" id="UP000000558">
    <property type="component" value="Chromosome"/>
</dbReference>
<dbReference type="Proteomes" id="UP000002519">
    <property type="component" value="Chromosome"/>
</dbReference>
<dbReference type="GO" id="GO:0003677">
    <property type="term" value="F:DNA binding"/>
    <property type="evidence" value="ECO:0007669"/>
    <property type="project" value="UniProtKB-KW"/>
</dbReference>
<dbReference type="GO" id="GO:0006355">
    <property type="term" value="P:regulation of DNA-templated transcription"/>
    <property type="evidence" value="ECO:0007669"/>
    <property type="project" value="InterPro"/>
</dbReference>
<dbReference type="CDD" id="cd06170">
    <property type="entry name" value="LuxR_C_like"/>
    <property type="match status" value="1"/>
</dbReference>
<dbReference type="FunFam" id="1.10.10.10:FF:000267">
    <property type="entry name" value="HTH-type transcriptional regulator DctR"/>
    <property type="match status" value="1"/>
</dbReference>
<dbReference type="Gene3D" id="1.10.10.10">
    <property type="entry name" value="Winged helix-like DNA-binding domain superfamily/Winged helix DNA-binding domain"/>
    <property type="match status" value="1"/>
</dbReference>
<dbReference type="InterPro" id="IPR016032">
    <property type="entry name" value="Sig_transdc_resp-reg_C-effctor"/>
</dbReference>
<dbReference type="InterPro" id="IPR000792">
    <property type="entry name" value="Tscrpt_reg_LuxR_C"/>
</dbReference>
<dbReference type="InterPro" id="IPR036388">
    <property type="entry name" value="WH-like_DNA-bd_sf"/>
</dbReference>
<dbReference type="Pfam" id="PF00196">
    <property type="entry name" value="GerE"/>
    <property type="match status" value="1"/>
</dbReference>
<dbReference type="SMART" id="SM00421">
    <property type="entry name" value="HTH_LUXR"/>
    <property type="match status" value="1"/>
</dbReference>
<dbReference type="SUPFAM" id="SSF46894">
    <property type="entry name" value="C-terminal effector domain of the bipartite response regulators"/>
    <property type="match status" value="1"/>
</dbReference>
<dbReference type="PROSITE" id="PS50043">
    <property type="entry name" value="HTH_LUXR_2"/>
    <property type="match status" value="1"/>
</dbReference>
<accession>Q8X5P3</accession>
<accession>Q7AA19</accession>
<gene>
    <name type="primary">dctR</name>
    <name type="ordered locus">Z4909</name>
    <name type="ordered locus">ECs4378</name>
</gene>
<proteinExistence type="inferred from homology"/>
<protein>
    <recommendedName>
        <fullName>HTH-type transcriptional regulator DctR</fullName>
    </recommendedName>
</protein>
<organism>
    <name type="scientific">Escherichia coli O157:H7</name>
    <dbReference type="NCBI Taxonomy" id="83334"/>
    <lineage>
        <taxon>Bacteria</taxon>
        <taxon>Pseudomonadati</taxon>
        <taxon>Pseudomonadota</taxon>
        <taxon>Gammaproteobacteria</taxon>
        <taxon>Enterobacterales</taxon>
        <taxon>Enterobacteriaceae</taxon>
        <taxon>Escherichia</taxon>
    </lineage>
</organism>
<sequence>MFLIITRDTMFFTAMKNILSKGNVVHIQNEEEIDVMLHQNAFVIIDTLMNNVFHSNFLTQIERLKPVHVIIFSPFNIKRCLGKVPVTFVPRTITIIDFVALINGSYCSVPEANVSLSRKQHQVLSCIANQMTTEDILEKLKISLKTFYCHKHNIMMILNLKRINELVRHQHIDYLV</sequence>
<comment type="function">
    <text evidence="1 3">May act as a transcriptional regulator of dctA (By similarity). Could be involved in the regulation of the genes coding for the type III secretion system in enterohaemorragic strains.</text>
</comment>
<comment type="induction">
    <text evidence="1">By acidic conditions. Could be induced by EvgA via the induction of YdeO (By similarity).</text>
</comment>
<reference key="1">
    <citation type="journal article" date="2001" name="Nature">
        <title>Genome sequence of enterohaemorrhagic Escherichia coli O157:H7.</title>
        <authorList>
            <person name="Perna N.T."/>
            <person name="Plunkett G. III"/>
            <person name="Burland V."/>
            <person name="Mau B."/>
            <person name="Glasner J.D."/>
            <person name="Rose D.J."/>
            <person name="Mayhew G.F."/>
            <person name="Evans P.S."/>
            <person name="Gregor J."/>
            <person name="Kirkpatrick H.A."/>
            <person name="Posfai G."/>
            <person name="Hackett J."/>
            <person name="Klink S."/>
            <person name="Boutin A."/>
            <person name="Shao Y."/>
            <person name="Miller L."/>
            <person name="Grotbeck E.J."/>
            <person name="Davis N.W."/>
            <person name="Lim A."/>
            <person name="Dimalanta E.T."/>
            <person name="Potamousis K."/>
            <person name="Apodaca J."/>
            <person name="Anantharaman T.S."/>
            <person name="Lin J."/>
            <person name="Yen G."/>
            <person name="Schwartz D.C."/>
            <person name="Welch R.A."/>
            <person name="Blattner F.R."/>
        </authorList>
    </citation>
    <scope>NUCLEOTIDE SEQUENCE [LARGE SCALE GENOMIC DNA]</scope>
    <source>
        <strain>O157:H7 / EDL933 / ATCC 700927 / EHEC</strain>
    </source>
</reference>
<reference key="2">
    <citation type="journal article" date="2001" name="DNA Res.">
        <title>Complete genome sequence of enterohemorrhagic Escherichia coli O157:H7 and genomic comparison with a laboratory strain K-12.</title>
        <authorList>
            <person name="Hayashi T."/>
            <person name="Makino K."/>
            <person name="Ohnishi M."/>
            <person name="Kurokawa K."/>
            <person name="Ishii K."/>
            <person name="Yokoyama K."/>
            <person name="Han C.-G."/>
            <person name="Ohtsubo E."/>
            <person name="Nakayama K."/>
            <person name="Murata T."/>
            <person name="Tanaka M."/>
            <person name="Tobe T."/>
            <person name="Iida T."/>
            <person name="Takami H."/>
            <person name="Honda T."/>
            <person name="Sasakawa C."/>
            <person name="Ogasawara N."/>
            <person name="Yasunaga T."/>
            <person name="Kuhara S."/>
            <person name="Shiba T."/>
            <person name="Hattori M."/>
            <person name="Shinagawa H."/>
        </authorList>
    </citation>
    <scope>NUCLEOTIDE SEQUENCE [LARGE SCALE GENOMIC DNA]</scope>
    <source>
        <strain>O157:H7 / Sakai / RIMD 0509952 / EHEC</strain>
    </source>
</reference>
<reference key="3">
    <citation type="journal article" date="2003" name="Infect. Immun.">
        <title>Increased adherence to Caco-2 cells caused by disruption of the yhiE and yhiF genes in enterohemorrhagic Escherichia coli O157:H7.</title>
        <authorList>
            <person name="Tatsuno I."/>
            <person name="Nagano K."/>
            <person name="Taguchi K."/>
            <person name="Rong L."/>
            <person name="Mori H."/>
            <person name="Sasakawa C."/>
        </authorList>
    </citation>
    <scope>FUNCTION</scope>
    <source>
        <strain>O157:H7 / Sakai / RIMD 0509952 / EHEC</strain>
    </source>
</reference>